<comment type="function">
    <text evidence="1">Extracellular aminopeptidase that allows assimilation of proteinaceous substrates.</text>
</comment>
<comment type="cofactor">
    <cofactor evidence="1">
        <name>Zn(2+)</name>
        <dbReference type="ChEBI" id="CHEBI:29105"/>
    </cofactor>
    <text evidence="1">Binds 2 Zn(2+) ions per subunit.</text>
</comment>
<comment type="subunit">
    <text evidence="1">Monomer.</text>
</comment>
<comment type="subcellular location">
    <subcellularLocation>
        <location evidence="1">Secreted</location>
    </subcellularLocation>
</comment>
<comment type="similarity">
    <text evidence="3">Belongs to the peptidase M28 family. M28E subfamily.</text>
</comment>
<proteinExistence type="inferred from homology"/>
<accession>Q0U6L1</accession>
<keyword id="KW-0031">Aminopeptidase</keyword>
<keyword id="KW-1015">Disulfide bond</keyword>
<keyword id="KW-0325">Glycoprotein</keyword>
<keyword id="KW-0378">Hydrolase</keyword>
<keyword id="KW-0479">Metal-binding</keyword>
<keyword id="KW-0645">Protease</keyword>
<keyword id="KW-0964">Secreted</keyword>
<keyword id="KW-0732">Signal</keyword>
<keyword id="KW-0862">Zinc</keyword>
<keyword id="KW-0865">Zymogen</keyword>
<protein>
    <recommendedName>
        <fullName>Leucine aminopeptidase 1</fullName>
        <ecNumber>3.4.11.-</ecNumber>
    </recommendedName>
    <alternativeName>
        <fullName>Leucyl aminopeptidase 1</fullName>
        <shortName>LAP1</shortName>
    </alternativeName>
</protein>
<gene>
    <name type="primary">LAP1</name>
    <name type="ORF">SNOG_12603</name>
</gene>
<reference key="1">
    <citation type="journal article" date="2007" name="Plant Cell">
        <title>Dothideomycete-plant interactions illuminated by genome sequencing and EST analysis of the wheat pathogen Stagonospora nodorum.</title>
        <authorList>
            <person name="Hane J.K."/>
            <person name="Lowe R.G.T."/>
            <person name="Solomon P.S."/>
            <person name="Tan K.-C."/>
            <person name="Schoch C.L."/>
            <person name="Spatafora J.W."/>
            <person name="Crous P.W."/>
            <person name="Kodira C.D."/>
            <person name="Birren B.W."/>
            <person name="Galagan J.E."/>
            <person name="Torriani S.F.F."/>
            <person name="McDonald B.A."/>
            <person name="Oliver R.P."/>
        </authorList>
    </citation>
    <scope>NUCLEOTIDE SEQUENCE [LARGE SCALE GENOMIC DNA]</scope>
    <source>
        <strain>SN15 / ATCC MYA-4574 / FGSC 10173</strain>
    </source>
</reference>
<evidence type="ECO:0000250" key="1"/>
<evidence type="ECO:0000255" key="2"/>
<evidence type="ECO:0000305" key="3"/>
<feature type="signal peptide" evidence="2">
    <location>
        <begin position="1"/>
        <end position="18"/>
    </location>
</feature>
<feature type="propeptide" id="PRO_0000412438" evidence="1">
    <location>
        <begin position="19"/>
        <end position="89"/>
    </location>
</feature>
<feature type="chain" id="PRO_0000412439" description="Leucine aminopeptidase 1">
    <location>
        <begin position="90"/>
        <end position="389"/>
    </location>
</feature>
<feature type="binding site" evidence="1">
    <location>
        <position position="188"/>
    </location>
    <ligand>
        <name>Zn(2+)</name>
        <dbReference type="ChEBI" id="CHEBI:29105"/>
        <label>1</label>
    </ligand>
</feature>
<feature type="binding site" evidence="1">
    <location>
        <position position="207"/>
    </location>
    <ligand>
        <name>Zn(2+)</name>
        <dbReference type="ChEBI" id="CHEBI:29105"/>
        <label>1</label>
    </ligand>
</feature>
<feature type="binding site" evidence="1">
    <location>
        <position position="207"/>
    </location>
    <ligand>
        <name>Zn(2+)</name>
        <dbReference type="ChEBI" id="CHEBI:29105"/>
        <label>2</label>
        <note>catalytic</note>
    </ligand>
</feature>
<feature type="binding site" evidence="1">
    <location>
        <position position="246"/>
    </location>
    <ligand>
        <name>Zn(2+)</name>
        <dbReference type="ChEBI" id="CHEBI:29105"/>
        <label>2</label>
        <note>catalytic</note>
    </ligand>
</feature>
<feature type="binding site" evidence="1">
    <location>
        <position position="273"/>
    </location>
    <ligand>
        <name>Zn(2+)</name>
        <dbReference type="ChEBI" id="CHEBI:29105"/>
        <label>1</label>
    </ligand>
</feature>
<feature type="binding site" evidence="1">
    <location>
        <position position="355"/>
    </location>
    <ligand>
        <name>Zn(2+)</name>
        <dbReference type="ChEBI" id="CHEBI:29105"/>
        <label>2</label>
        <note>catalytic</note>
    </ligand>
</feature>
<feature type="glycosylation site" description="N-linked (GlcNAc...) asparagine" evidence="2">
    <location>
        <position position="99"/>
    </location>
</feature>
<feature type="glycosylation site" description="N-linked (GlcNAc...) asparagine" evidence="2">
    <location>
        <position position="156"/>
    </location>
</feature>
<feature type="glycosylation site" description="N-linked (GlcNAc...) asparagine" evidence="2">
    <location>
        <position position="180"/>
    </location>
</feature>
<feature type="disulfide bond" evidence="1">
    <location>
        <begin position="322"/>
        <end position="326"/>
    </location>
</feature>
<name>LAP1_PHANO</name>
<dbReference type="EC" id="3.4.11.-"/>
<dbReference type="EMBL" id="CH445347">
    <property type="protein sequence ID" value="EAT79901.1"/>
    <property type="molecule type" value="Genomic_DNA"/>
</dbReference>
<dbReference type="RefSeq" id="XP_001802824.1">
    <property type="nucleotide sequence ID" value="XM_001802772.1"/>
</dbReference>
<dbReference type="SMR" id="Q0U6L1"/>
<dbReference type="FunCoup" id="Q0U6L1">
    <property type="interactions" value="21"/>
</dbReference>
<dbReference type="MEROPS" id="M28.022"/>
<dbReference type="GlyCosmos" id="Q0U6L1">
    <property type="glycosylation" value="3 sites, No reported glycans"/>
</dbReference>
<dbReference type="EnsemblFungi" id="SNOT_12603">
    <property type="protein sequence ID" value="SNOT_12603"/>
    <property type="gene ID" value="SNOG_12603"/>
</dbReference>
<dbReference type="GeneID" id="5979735"/>
<dbReference type="KEGG" id="pno:SNOG_12603"/>
<dbReference type="VEuPathDB" id="FungiDB:JI435_126030"/>
<dbReference type="eggNOG" id="KOG2195">
    <property type="taxonomic scope" value="Eukaryota"/>
</dbReference>
<dbReference type="HOGENOM" id="CLU_025866_0_0_1"/>
<dbReference type="InParanoid" id="Q0U6L1"/>
<dbReference type="OMA" id="WPENTIE"/>
<dbReference type="OrthoDB" id="2214at2759"/>
<dbReference type="Proteomes" id="UP000001055">
    <property type="component" value="Unassembled WGS sequence"/>
</dbReference>
<dbReference type="GO" id="GO:0005576">
    <property type="term" value="C:extracellular region"/>
    <property type="evidence" value="ECO:0007669"/>
    <property type="project" value="UniProtKB-SubCell"/>
</dbReference>
<dbReference type="GO" id="GO:0004177">
    <property type="term" value="F:aminopeptidase activity"/>
    <property type="evidence" value="ECO:0007669"/>
    <property type="project" value="UniProtKB-KW"/>
</dbReference>
<dbReference type="GO" id="GO:0046872">
    <property type="term" value="F:metal ion binding"/>
    <property type="evidence" value="ECO:0007669"/>
    <property type="project" value="UniProtKB-KW"/>
</dbReference>
<dbReference type="GO" id="GO:0008235">
    <property type="term" value="F:metalloexopeptidase activity"/>
    <property type="evidence" value="ECO:0007669"/>
    <property type="project" value="InterPro"/>
</dbReference>
<dbReference type="GO" id="GO:0006508">
    <property type="term" value="P:proteolysis"/>
    <property type="evidence" value="ECO:0000318"/>
    <property type="project" value="GO_Central"/>
</dbReference>
<dbReference type="CDD" id="cd03879">
    <property type="entry name" value="M28_AAP"/>
    <property type="match status" value="1"/>
</dbReference>
<dbReference type="FunFam" id="3.40.630.10:FF:000042">
    <property type="entry name" value="Peptide hydrolase"/>
    <property type="match status" value="1"/>
</dbReference>
<dbReference type="Gene3D" id="3.40.630.10">
    <property type="entry name" value="Zn peptidases"/>
    <property type="match status" value="1"/>
</dbReference>
<dbReference type="InterPro" id="IPR045175">
    <property type="entry name" value="M28_fam"/>
</dbReference>
<dbReference type="InterPro" id="IPR007484">
    <property type="entry name" value="Peptidase_M28"/>
</dbReference>
<dbReference type="PANTHER" id="PTHR12147:SF56">
    <property type="entry name" value="AMINOPEPTIDASE YDR415C-RELATED"/>
    <property type="match status" value="1"/>
</dbReference>
<dbReference type="PANTHER" id="PTHR12147">
    <property type="entry name" value="METALLOPEPTIDASE M28 FAMILY MEMBER"/>
    <property type="match status" value="1"/>
</dbReference>
<dbReference type="Pfam" id="PF04389">
    <property type="entry name" value="Peptidase_M28"/>
    <property type="match status" value="1"/>
</dbReference>
<dbReference type="SUPFAM" id="SSF53187">
    <property type="entry name" value="Zn-dependent exopeptidases"/>
    <property type="match status" value="1"/>
</dbReference>
<organism>
    <name type="scientific">Phaeosphaeria nodorum (strain SN15 / ATCC MYA-4574 / FGSC 10173)</name>
    <name type="common">Glume blotch fungus</name>
    <name type="synonym">Parastagonospora nodorum</name>
    <dbReference type="NCBI Taxonomy" id="321614"/>
    <lineage>
        <taxon>Eukaryota</taxon>
        <taxon>Fungi</taxon>
        <taxon>Dikarya</taxon>
        <taxon>Ascomycota</taxon>
        <taxon>Pezizomycotina</taxon>
        <taxon>Dothideomycetes</taxon>
        <taxon>Pleosporomycetidae</taxon>
        <taxon>Pleosporales</taxon>
        <taxon>Pleosporineae</taxon>
        <taxon>Phaeosphaeriaceae</taxon>
        <taxon>Parastagonospora</taxon>
    </lineage>
</organism>
<sequence>MKSSVLLSLCTAALVAGAAHPLEPQVVLKDGQSTFTEPDEYLIELSPGETRWVTEEGKWELRRQNINFFDITHHEDLGTINANRLIEKSVKFPSKPAFNKTVVPLLKKLKKDNMRKHLETFTSFHTRYYKSQYGAQSSAWLLEQVSKTLSDAGAVNASVKAFPHPWGQSSIIATLPGKSNKTVVIGAHQDSINLFLPSILAAPGADDDGSGTVTILEALRVLLKSEGILDGSAPNTVEFHWYSAEEGGLLGSQAIFQSYEKEGRDVKAMLQQDMTGYVQKTLDAGEPESVGVITDFVDPGLTEFIKQIITVYCDIPFILTKCGYACSDHASASKAGYPSAFVIESDFKYSDSKIHTTEDKIEYLSFDHMLQHAKLTLALAYELAFAEFK</sequence>